<gene>
    <name evidence="1" type="primary">tusC</name>
    <name type="ordered locus">SDY_3505</name>
</gene>
<organism>
    <name type="scientific">Shigella dysenteriae serotype 1 (strain Sd197)</name>
    <dbReference type="NCBI Taxonomy" id="300267"/>
    <lineage>
        <taxon>Bacteria</taxon>
        <taxon>Pseudomonadati</taxon>
        <taxon>Pseudomonadota</taxon>
        <taxon>Gammaproteobacteria</taxon>
        <taxon>Enterobacterales</taxon>
        <taxon>Enterobacteriaceae</taxon>
        <taxon>Shigella</taxon>
    </lineage>
</organism>
<evidence type="ECO:0000255" key="1">
    <source>
        <dbReference type="HAMAP-Rule" id="MF_00389"/>
    </source>
</evidence>
<dbReference type="EMBL" id="CP000034">
    <property type="protein sequence ID" value="ABB63483.1"/>
    <property type="molecule type" value="Genomic_DNA"/>
</dbReference>
<dbReference type="RefSeq" id="WP_000820736.1">
    <property type="nucleotide sequence ID" value="NC_007606.1"/>
</dbReference>
<dbReference type="RefSeq" id="YP_404974.1">
    <property type="nucleotide sequence ID" value="NC_007606.1"/>
</dbReference>
<dbReference type="SMR" id="Q32B22"/>
<dbReference type="STRING" id="300267.SDY_3505"/>
<dbReference type="EnsemblBacteria" id="ABB63483">
    <property type="protein sequence ID" value="ABB63483"/>
    <property type="gene ID" value="SDY_3505"/>
</dbReference>
<dbReference type="GeneID" id="75173501"/>
<dbReference type="KEGG" id="sdy:SDY_3505"/>
<dbReference type="PATRIC" id="fig|300267.13.peg.4159"/>
<dbReference type="HOGENOM" id="CLU_155943_1_0_6"/>
<dbReference type="Proteomes" id="UP000002716">
    <property type="component" value="Chromosome"/>
</dbReference>
<dbReference type="GO" id="GO:0005737">
    <property type="term" value="C:cytoplasm"/>
    <property type="evidence" value="ECO:0007669"/>
    <property type="project" value="UniProtKB-SubCell"/>
</dbReference>
<dbReference type="GO" id="GO:0008033">
    <property type="term" value="P:tRNA processing"/>
    <property type="evidence" value="ECO:0007669"/>
    <property type="project" value="UniProtKB-UniRule"/>
</dbReference>
<dbReference type="FunFam" id="3.40.1260.10:FF:000004">
    <property type="entry name" value="Sulfurtransferase TusC"/>
    <property type="match status" value="1"/>
</dbReference>
<dbReference type="Gene3D" id="3.40.1260.10">
    <property type="entry name" value="DsrEFH-like"/>
    <property type="match status" value="1"/>
</dbReference>
<dbReference type="HAMAP" id="MF_00389">
    <property type="entry name" value="Thiourid_synth_C"/>
    <property type="match status" value="1"/>
</dbReference>
<dbReference type="InterPro" id="IPR027396">
    <property type="entry name" value="DsrEFH-like"/>
</dbReference>
<dbReference type="InterPro" id="IPR003787">
    <property type="entry name" value="Sulphur_relay_DsrE/F-like"/>
</dbReference>
<dbReference type="InterPro" id="IPR037450">
    <property type="entry name" value="Sulphur_relay_TusC"/>
</dbReference>
<dbReference type="InterPro" id="IPR017462">
    <property type="entry name" value="Sulphur_relay_TusC/DsrF"/>
</dbReference>
<dbReference type="NCBIfam" id="NF001238">
    <property type="entry name" value="PRK00211.1"/>
    <property type="match status" value="1"/>
</dbReference>
<dbReference type="NCBIfam" id="TIGR03010">
    <property type="entry name" value="sulf_tusC_dsrF"/>
    <property type="match status" value="1"/>
</dbReference>
<dbReference type="PANTHER" id="PTHR38780">
    <property type="entry name" value="PROTEIN TUSC"/>
    <property type="match status" value="1"/>
</dbReference>
<dbReference type="PANTHER" id="PTHR38780:SF1">
    <property type="entry name" value="PROTEIN TUSC"/>
    <property type="match status" value="1"/>
</dbReference>
<dbReference type="Pfam" id="PF02635">
    <property type="entry name" value="DsrE"/>
    <property type="match status" value="1"/>
</dbReference>
<dbReference type="SUPFAM" id="SSF75169">
    <property type="entry name" value="DsrEFH-like"/>
    <property type="match status" value="1"/>
</dbReference>
<proteinExistence type="inferred from homology"/>
<accession>Q32B22</accession>
<sequence>MKRIAFVFSTVPHGTAAGREGLDALLATSALTDELAVFFIADGVFQLLPGQKPDAVLARDYIATFKLLGLYDIEQCWVCAASLRERGLDPQTPFVVEATPLEADALRRELANYDVILRF</sequence>
<comment type="function">
    <text evidence="1">Part of a sulfur-relay system required for 2-thiolation of 5-methylaminomethyl-2-thiouridine (mnm(5)s(2)U) at tRNA wobble positions.</text>
</comment>
<comment type="subunit">
    <text evidence="1">Heterohexamer, formed by a dimer of trimers. The hexameric TusBCD complex contains 2 copies each of TusB, TusC and TusD. The TusBCD complex interacts with TusE.</text>
</comment>
<comment type="subcellular location">
    <subcellularLocation>
        <location evidence="1">Cytoplasm</location>
    </subcellularLocation>
</comment>
<comment type="similarity">
    <text evidence="1">Belongs to the DsrF/TusC family.</text>
</comment>
<keyword id="KW-0963">Cytoplasm</keyword>
<keyword id="KW-1185">Reference proteome</keyword>
<keyword id="KW-0819">tRNA processing</keyword>
<protein>
    <recommendedName>
        <fullName evidence="1">Protein TusC</fullName>
    </recommendedName>
    <alternativeName>
        <fullName evidence="1">tRNA 2-thiouridine synthesizing protein C</fullName>
    </alternativeName>
</protein>
<reference key="1">
    <citation type="journal article" date="2005" name="Nucleic Acids Res.">
        <title>Genome dynamics and diversity of Shigella species, the etiologic agents of bacillary dysentery.</title>
        <authorList>
            <person name="Yang F."/>
            <person name="Yang J."/>
            <person name="Zhang X."/>
            <person name="Chen L."/>
            <person name="Jiang Y."/>
            <person name="Yan Y."/>
            <person name="Tang X."/>
            <person name="Wang J."/>
            <person name="Xiong Z."/>
            <person name="Dong J."/>
            <person name="Xue Y."/>
            <person name="Zhu Y."/>
            <person name="Xu X."/>
            <person name="Sun L."/>
            <person name="Chen S."/>
            <person name="Nie H."/>
            <person name="Peng J."/>
            <person name="Xu J."/>
            <person name="Wang Y."/>
            <person name="Yuan Z."/>
            <person name="Wen Y."/>
            <person name="Yao Z."/>
            <person name="Shen Y."/>
            <person name="Qiang B."/>
            <person name="Hou Y."/>
            <person name="Yu J."/>
            <person name="Jin Q."/>
        </authorList>
    </citation>
    <scope>NUCLEOTIDE SEQUENCE [LARGE SCALE GENOMIC DNA]</scope>
    <source>
        <strain>Sd197</strain>
    </source>
</reference>
<feature type="chain" id="PRO_0000234457" description="Protein TusC">
    <location>
        <begin position="1"/>
        <end position="119"/>
    </location>
</feature>
<name>TUSC_SHIDS</name>